<accession>C1CU40</accession>
<proteinExistence type="inferred from homology"/>
<evidence type="ECO:0000255" key="1">
    <source>
        <dbReference type="HAMAP-Rule" id="MF_00340"/>
    </source>
</evidence>
<evidence type="ECO:0000305" key="2"/>
<protein>
    <recommendedName>
        <fullName evidence="1">Large ribosomal subunit protein bL32</fullName>
    </recommendedName>
    <alternativeName>
        <fullName evidence="2">50S ribosomal protein L32</fullName>
    </alternativeName>
</protein>
<gene>
    <name evidence="1" type="primary">rpmF</name>
    <name type="ordered locus">SPT_2146</name>
</gene>
<name>RL32_STRZT</name>
<dbReference type="EMBL" id="CP000921">
    <property type="protein sequence ID" value="ACO23150.1"/>
    <property type="molecule type" value="Genomic_DNA"/>
</dbReference>
<dbReference type="RefSeq" id="WP_000290417.1">
    <property type="nucleotide sequence ID" value="NC_012469.1"/>
</dbReference>
<dbReference type="SMR" id="C1CU40"/>
<dbReference type="GeneID" id="49598937"/>
<dbReference type="KEGG" id="snt:SPT_2146"/>
<dbReference type="HOGENOM" id="CLU_129084_2_3_9"/>
<dbReference type="GO" id="GO:0015934">
    <property type="term" value="C:large ribosomal subunit"/>
    <property type="evidence" value="ECO:0007669"/>
    <property type="project" value="InterPro"/>
</dbReference>
<dbReference type="GO" id="GO:0003735">
    <property type="term" value="F:structural constituent of ribosome"/>
    <property type="evidence" value="ECO:0007669"/>
    <property type="project" value="InterPro"/>
</dbReference>
<dbReference type="GO" id="GO:0006412">
    <property type="term" value="P:translation"/>
    <property type="evidence" value="ECO:0007669"/>
    <property type="project" value="UniProtKB-UniRule"/>
</dbReference>
<dbReference type="HAMAP" id="MF_00340">
    <property type="entry name" value="Ribosomal_bL32"/>
    <property type="match status" value="1"/>
</dbReference>
<dbReference type="InterPro" id="IPR002677">
    <property type="entry name" value="Ribosomal_bL32"/>
</dbReference>
<dbReference type="InterPro" id="IPR044957">
    <property type="entry name" value="Ribosomal_bL32_bact"/>
</dbReference>
<dbReference type="InterPro" id="IPR011332">
    <property type="entry name" value="Ribosomal_zn-bd"/>
</dbReference>
<dbReference type="NCBIfam" id="TIGR01031">
    <property type="entry name" value="rpmF_bact"/>
    <property type="match status" value="1"/>
</dbReference>
<dbReference type="PANTHER" id="PTHR35534">
    <property type="entry name" value="50S RIBOSOMAL PROTEIN L32"/>
    <property type="match status" value="1"/>
</dbReference>
<dbReference type="PANTHER" id="PTHR35534:SF1">
    <property type="entry name" value="LARGE RIBOSOMAL SUBUNIT PROTEIN BL32"/>
    <property type="match status" value="1"/>
</dbReference>
<dbReference type="Pfam" id="PF01783">
    <property type="entry name" value="Ribosomal_L32p"/>
    <property type="match status" value="1"/>
</dbReference>
<dbReference type="SUPFAM" id="SSF57829">
    <property type="entry name" value="Zn-binding ribosomal proteins"/>
    <property type="match status" value="1"/>
</dbReference>
<reference key="1">
    <citation type="journal article" date="2010" name="Genome Biol.">
        <title>Structure and dynamics of the pan-genome of Streptococcus pneumoniae and closely related species.</title>
        <authorList>
            <person name="Donati C."/>
            <person name="Hiller N.L."/>
            <person name="Tettelin H."/>
            <person name="Muzzi A."/>
            <person name="Croucher N.J."/>
            <person name="Angiuoli S.V."/>
            <person name="Oggioni M."/>
            <person name="Dunning Hotopp J.C."/>
            <person name="Hu F.Z."/>
            <person name="Riley D.R."/>
            <person name="Covacci A."/>
            <person name="Mitchell T.J."/>
            <person name="Bentley S.D."/>
            <person name="Kilian M."/>
            <person name="Ehrlich G.D."/>
            <person name="Rappuoli R."/>
            <person name="Moxon E.R."/>
            <person name="Masignani V."/>
        </authorList>
    </citation>
    <scope>NUCLEOTIDE SEQUENCE [LARGE SCALE GENOMIC DNA]</scope>
    <source>
        <strain>Taiwan19F-14</strain>
    </source>
</reference>
<organism>
    <name type="scientific">Streptococcus pneumoniae (strain Taiwan19F-14)</name>
    <dbReference type="NCBI Taxonomy" id="487213"/>
    <lineage>
        <taxon>Bacteria</taxon>
        <taxon>Bacillati</taxon>
        <taxon>Bacillota</taxon>
        <taxon>Bacilli</taxon>
        <taxon>Lactobacillales</taxon>
        <taxon>Streptococcaceae</taxon>
        <taxon>Streptococcus</taxon>
    </lineage>
</organism>
<feature type="chain" id="PRO_1000195999" description="Large ribosomal subunit protein bL32">
    <location>
        <begin position="1"/>
        <end position="60"/>
    </location>
</feature>
<keyword id="KW-0687">Ribonucleoprotein</keyword>
<keyword id="KW-0689">Ribosomal protein</keyword>
<comment type="similarity">
    <text evidence="1">Belongs to the bacterial ribosomal protein bL32 family.</text>
</comment>
<sequence>MAVPARRTSKAKKNKRRTHYKVTAPSVNFDETTGDYSRSHRVSLKGYYKGRKIAKAASAE</sequence>